<proteinExistence type="inferred from homology"/>
<feature type="chain" id="PRO_1000087580" description="GTP cyclohydrolase FolE2">
    <location>
        <begin position="1"/>
        <end position="367"/>
    </location>
</feature>
<feature type="site" description="May be catalytically important" evidence="1">
    <location>
        <position position="224"/>
    </location>
</feature>
<protein>
    <recommendedName>
        <fullName evidence="1">GTP cyclohydrolase FolE2</fullName>
        <ecNumber evidence="1">3.5.4.16</ecNumber>
    </recommendedName>
</protein>
<dbReference type="EC" id="3.5.4.16" evidence="1"/>
<dbReference type="EMBL" id="CP000830">
    <property type="protein sequence ID" value="ABV94145.1"/>
    <property type="molecule type" value="Genomic_DNA"/>
</dbReference>
<dbReference type="RefSeq" id="WP_012179076.1">
    <property type="nucleotide sequence ID" value="NC_009952.1"/>
</dbReference>
<dbReference type="SMR" id="A8LS52"/>
<dbReference type="STRING" id="398580.Dshi_2411"/>
<dbReference type="KEGG" id="dsh:Dshi_2411"/>
<dbReference type="eggNOG" id="COG1469">
    <property type="taxonomic scope" value="Bacteria"/>
</dbReference>
<dbReference type="HOGENOM" id="CLU_062816_0_1_5"/>
<dbReference type="OrthoDB" id="239637at2"/>
<dbReference type="UniPathway" id="UPA00848">
    <property type="reaction ID" value="UER00151"/>
</dbReference>
<dbReference type="Proteomes" id="UP000006833">
    <property type="component" value="Chromosome"/>
</dbReference>
<dbReference type="GO" id="GO:0003934">
    <property type="term" value="F:GTP cyclohydrolase I activity"/>
    <property type="evidence" value="ECO:0007669"/>
    <property type="project" value="UniProtKB-UniRule"/>
</dbReference>
<dbReference type="GO" id="GO:0046654">
    <property type="term" value="P:tetrahydrofolate biosynthetic process"/>
    <property type="evidence" value="ECO:0007669"/>
    <property type="project" value="UniProtKB-UniRule"/>
</dbReference>
<dbReference type="Gene3D" id="3.10.270.10">
    <property type="entry name" value="Urate Oxidase"/>
    <property type="match status" value="1"/>
</dbReference>
<dbReference type="HAMAP" id="MF_01527_B">
    <property type="entry name" value="GTP_cyclohydrol_B"/>
    <property type="match status" value="1"/>
</dbReference>
<dbReference type="InterPro" id="IPR022838">
    <property type="entry name" value="GTP_cyclohydrolase_FolE2"/>
</dbReference>
<dbReference type="InterPro" id="IPR003801">
    <property type="entry name" value="GTP_cyclohydrolase_FolE2/MptA"/>
</dbReference>
<dbReference type="NCBIfam" id="NF010200">
    <property type="entry name" value="PRK13674.1-1"/>
    <property type="match status" value="1"/>
</dbReference>
<dbReference type="PANTHER" id="PTHR36445">
    <property type="entry name" value="GTP CYCLOHYDROLASE MPTA"/>
    <property type="match status" value="1"/>
</dbReference>
<dbReference type="PANTHER" id="PTHR36445:SF1">
    <property type="entry name" value="GTP CYCLOHYDROLASE MPTA"/>
    <property type="match status" value="1"/>
</dbReference>
<dbReference type="Pfam" id="PF02649">
    <property type="entry name" value="GCHY-1"/>
    <property type="match status" value="1"/>
</dbReference>
<name>GCH4_DINSH</name>
<keyword id="KW-0378">Hydrolase</keyword>
<keyword id="KW-1185">Reference proteome</keyword>
<reference key="1">
    <citation type="journal article" date="2010" name="ISME J.">
        <title>The complete genome sequence of the algal symbiont Dinoroseobacter shibae: a hitchhiker's guide to life in the sea.</title>
        <authorList>
            <person name="Wagner-Dobler I."/>
            <person name="Ballhausen B."/>
            <person name="Berger M."/>
            <person name="Brinkhoff T."/>
            <person name="Buchholz I."/>
            <person name="Bunk B."/>
            <person name="Cypionka H."/>
            <person name="Daniel R."/>
            <person name="Drepper T."/>
            <person name="Gerdts G."/>
            <person name="Hahnke S."/>
            <person name="Han C."/>
            <person name="Jahn D."/>
            <person name="Kalhoefer D."/>
            <person name="Kiss H."/>
            <person name="Klenk H.P."/>
            <person name="Kyrpides N."/>
            <person name="Liebl W."/>
            <person name="Liesegang H."/>
            <person name="Meincke L."/>
            <person name="Pati A."/>
            <person name="Petersen J."/>
            <person name="Piekarski T."/>
            <person name="Pommerenke C."/>
            <person name="Pradella S."/>
            <person name="Pukall R."/>
            <person name="Rabus R."/>
            <person name="Stackebrandt E."/>
            <person name="Thole S."/>
            <person name="Thompson L."/>
            <person name="Tielen P."/>
            <person name="Tomasch J."/>
            <person name="von Jan M."/>
            <person name="Wanphrut N."/>
            <person name="Wichels A."/>
            <person name="Zech H."/>
            <person name="Simon M."/>
        </authorList>
    </citation>
    <scope>NUCLEOTIDE SEQUENCE [LARGE SCALE GENOMIC DNA]</scope>
    <source>
        <strain>DSM 16493 / NCIMB 14021 / DFL 12</strain>
    </source>
</reference>
<accession>A8LS52</accession>
<organism>
    <name type="scientific">Dinoroseobacter shibae (strain DSM 16493 / NCIMB 14021 / DFL 12)</name>
    <dbReference type="NCBI Taxonomy" id="398580"/>
    <lineage>
        <taxon>Bacteria</taxon>
        <taxon>Pseudomonadati</taxon>
        <taxon>Pseudomonadota</taxon>
        <taxon>Alphaproteobacteria</taxon>
        <taxon>Rhodobacterales</taxon>
        <taxon>Roseobacteraceae</taxon>
        <taxon>Dinoroseobacter</taxon>
    </lineage>
</organism>
<sequence length="367" mass="41049">MNVYTPDIDKLPNRDEAATALATLRAWAQTASAAEIETLDPSVARLLPGDPSDYPSLARAYPEEFSVDAAYKDSLPDLQNGPSSLIRGAKAQIQHVGISNFRLPIRFHTRDNGDVTLETSVTGSVSLEAEKKGINMSRIMRTFYGHADETFSFEVIERTLDAYKSDLESFDARIQMRFSFPMKVESLRSGLSGYQYYDIALEVVDVNGQRRKFMHLDYVYSSTCPCSLELSEHARQFRGQLATPHSQRSVARVSVELTCGADDCLWFEDLVELCREAIPTETQVMVKREDEQAFAELNAANPIFVEDAARSFCLALQRDDRIGDFRVVASHQESLHSHDAVSVLTEGPTFASDSLDPRLFQTLFHVG</sequence>
<evidence type="ECO:0000255" key="1">
    <source>
        <dbReference type="HAMAP-Rule" id="MF_01527"/>
    </source>
</evidence>
<gene>
    <name evidence="1" type="primary">folE2</name>
    <name type="ordered locus">Dshi_2411</name>
</gene>
<comment type="function">
    <text evidence="1">Converts GTP to 7,8-dihydroneopterin triphosphate.</text>
</comment>
<comment type="catalytic activity">
    <reaction evidence="1">
        <text>GTP + H2O = 7,8-dihydroneopterin 3'-triphosphate + formate + H(+)</text>
        <dbReference type="Rhea" id="RHEA:17473"/>
        <dbReference type="ChEBI" id="CHEBI:15377"/>
        <dbReference type="ChEBI" id="CHEBI:15378"/>
        <dbReference type="ChEBI" id="CHEBI:15740"/>
        <dbReference type="ChEBI" id="CHEBI:37565"/>
        <dbReference type="ChEBI" id="CHEBI:58462"/>
        <dbReference type="EC" id="3.5.4.16"/>
    </reaction>
</comment>
<comment type="pathway">
    <text evidence="1">Cofactor biosynthesis; 7,8-dihydroneopterin triphosphate biosynthesis; 7,8-dihydroneopterin triphosphate from GTP: step 1/1.</text>
</comment>
<comment type="similarity">
    <text evidence="1">Belongs to the GTP cyclohydrolase IV family.</text>
</comment>